<dbReference type="EC" id="2.7.4.6"/>
<dbReference type="EMBL" id="D11465">
    <property type="protein sequence ID" value="BAA02018.1"/>
    <property type="molecule type" value="mRNA"/>
</dbReference>
<dbReference type="PIR" id="S28226">
    <property type="entry name" value="S28226"/>
</dbReference>
<dbReference type="SMR" id="Q01402"/>
<dbReference type="Proteomes" id="UP001155700">
    <property type="component" value="Unplaced"/>
</dbReference>
<dbReference type="GO" id="GO:0009507">
    <property type="term" value="C:chloroplast"/>
    <property type="evidence" value="ECO:0007669"/>
    <property type="project" value="UniProtKB-SubCell"/>
</dbReference>
<dbReference type="GO" id="GO:0005524">
    <property type="term" value="F:ATP binding"/>
    <property type="evidence" value="ECO:0007669"/>
    <property type="project" value="UniProtKB-KW"/>
</dbReference>
<dbReference type="GO" id="GO:0046872">
    <property type="term" value="F:metal ion binding"/>
    <property type="evidence" value="ECO:0007669"/>
    <property type="project" value="UniProtKB-KW"/>
</dbReference>
<dbReference type="GO" id="GO:0004550">
    <property type="term" value="F:nucleoside diphosphate kinase activity"/>
    <property type="evidence" value="ECO:0007669"/>
    <property type="project" value="UniProtKB-EC"/>
</dbReference>
<dbReference type="GO" id="GO:0006241">
    <property type="term" value="P:CTP biosynthetic process"/>
    <property type="evidence" value="ECO:0007669"/>
    <property type="project" value="InterPro"/>
</dbReference>
<dbReference type="GO" id="GO:0006183">
    <property type="term" value="P:GTP biosynthetic process"/>
    <property type="evidence" value="ECO:0007669"/>
    <property type="project" value="InterPro"/>
</dbReference>
<dbReference type="GO" id="GO:0006228">
    <property type="term" value="P:UTP biosynthetic process"/>
    <property type="evidence" value="ECO:0007669"/>
    <property type="project" value="InterPro"/>
</dbReference>
<dbReference type="CDD" id="cd04413">
    <property type="entry name" value="NDPk_I"/>
    <property type="match status" value="1"/>
</dbReference>
<dbReference type="FunFam" id="3.30.70.141:FF:000002">
    <property type="entry name" value="Nucleoside diphosphate kinase"/>
    <property type="match status" value="1"/>
</dbReference>
<dbReference type="Gene3D" id="3.30.70.141">
    <property type="entry name" value="Nucleoside diphosphate kinase-like domain"/>
    <property type="match status" value="1"/>
</dbReference>
<dbReference type="HAMAP" id="MF_00451">
    <property type="entry name" value="NDP_kinase"/>
    <property type="match status" value="1"/>
</dbReference>
<dbReference type="InterPro" id="IPR034907">
    <property type="entry name" value="NDK-like_dom"/>
</dbReference>
<dbReference type="InterPro" id="IPR036850">
    <property type="entry name" value="NDK-like_dom_sf"/>
</dbReference>
<dbReference type="InterPro" id="IPR001564">
    <property type="entry name" value="Nucleoside_diP_kinase"/>
</dbReference>
<dbReference type="InterPro" id="IPR023005">
    <property type="entry name" value="Nucleoside_diP_kinase_AS"/>
</dbReference>
<dbReference type="NCBIfam" id="NF001908">
    <property type="entry name" value="PRK00668.1"/>
    <property type="match status" value="1"/>
</dbReference>
<dbReference type="PANTHER" id="PTHR11349">
    <property type="entry name" value="NUCLEOSIDE DIPHOSPHATE KINASE"/>
    <property type="match status" value="1"/>
</dbReference>
<dbReference type="Pfam" id="PF00334">
    <property type="entry name" value="NDK"/>
    <property type="match status" value="1"/>
</dbReference>
<dbReference type="PRINTS" id="PR01243">
    <property type="entry name" value="NUCDPKINASE"/>
</dbReference>
<dbReference type="SMART" id="SM00562">
    <property type="entry name" value="NDK"/>
    <property type="match status" value="1"/>
</dbReference>
<dbReference type="SUPFAM" id="SSF54919">
    <property type="entry name" value="Nucleoside diphosphate kinase, NDK"/>
    <property type="match status" value="1"/>
</dbReference>
<dbReference type="PROSITE" id="PS00469">
    <property type="entry name" value="NDPK"/>
    <property type="match status" value="1"/>
</dbReference>
<dbReference type="PROSITE" id="PS51374">
    <property type="entry name" value="NDPK_LIKE"/>
    <property type="match status" value="1"/>
</dbReference>
<protein>
    <recommendedName>
        <fullName>Nucleoside diphosphate kinase 2, chloroplastic</fullName>
        <ecNumber>2.7.4.6</ecNumber>
    </recommendedName>
    <alternativeName>
        <fullName>Nucleoside diphosphate kinase II</fullName>
        <shortName>NDK II</shortName>
        <shortName>NDP kinase II</shortName>
        <shortName>NDPK II</shortName>
    </alternativeName>
    <component>
        <recommendedName>
            <fullName>Nucleoside diphosphate kinase 2 high molecular weight</fullName>
        </recommendedName>
    </component>
    <component>
        <recommendedName>
            <fullName>Nucleoside diphosphate kinase 2 low molecular weight</fullName>
        </recommendedName>
    </component>
</protein>
<organism>
    <name type="scientific">Spinacia oleracea</name>
    <name type="common">Spinach</name>
    <dbReference type="NCBI Taxonomy" id="3562"/>
    <lineage>
        <taxon>Eukaryota</taxon>
        <taxon>Viridiplantae</taxon>
        <taxon>Streptophyta</taxon>
        <taxon>Embryophyta</taxon>
        <taxon>Tracheophyta</taxon>
        <taxon>Spermatophyta</taxon>
        <taxon>Magnoliopsida</taxon>
        <taxon>eudicotyledons</taxon>
        <taxon>Gunneridae</taxon>
        <taxon>Pentapetalae</taxon>
        <taxon>Caryophyllales</taxon>
        <taxon>Chenopodiaceae</taxon>
        <taxon>Chenopodioideae</taxon>
        <taxon>Anserineae</taxon>
        <taxon>Spinacia</taxon>
    </lineage>
</organism>
<sequence length="233" mass="26107">MEAMSGLSSPCNCISSLPHSSSTTTRHQNLLFRRNNHHQQKLAAFHSQSHLFSTKCPLISHSLPRKKSFKPHIFLPHLVASMEQVEETYIMIKPDGVQRGLVGEIISRFEKKGFKLIGLKMYPCPKELAEEHYKDLKAKSFYQKLIDYITSGPVVCMAWEGVGVVASSRKLIGATDPLQAEPGTIRGDLAVQTGRNVVHGSDSPDNGKREIGLWFKEGEICQWTPAQAPWLRE</sequence>
<name>NDK2_SPIOL</name>
<reference key="1">
    <citation type="journal article" date="1993" name="Biochim. Biophys. Acta">
        <title>Nucleotide sequence of the cDNA encoding nucleoside diphosphate kinase II from spinach leaves.</title>
        <authorList>
            <person name="Zhang J."/>
            <person name="Nomura T."/>
            <person name="Yatsunami K."/>
            <person name="Honda A."/>
            <person name="Sugimoto Y."/>
            <person name="Moriwaki T."/>
            <person name="Yamamoto J."/>
            <person name="Ohta M."/>
            <person name="Fukui T."/>
            <person name="Ichikawa A."/>
        </authorList>
    </citation>
    <scope>NUCLEOTIDE SEQUENCE [MRNA]</scope>
    <scope>PARTIAL PROTEIN SEQUENCE</scope>
    <source>
        <tissue>Leaf</tissue>
    </source>
</reference>
<proteinExistence type="evidence at protein level"/>
<keyword id="KW-0067">ATP-binding</keyword>
<keyword id="KW-0150">Chloroplast</keyword>
<keyword id="KW-0903">Direct protein sequencing</keyword>
<keyword id="KW-0418">Kinase</keyword>
<keyword id="KW-0460">Magnesium</keyword>
<keyword id="KW-0479">Metal-binding</keyword>
<keyword id="KW-0546">Nucleotide metabolism</keyword>
<keyword id="KW-0547">Nucleotide-binding</keyword>
<keyword id="KW-0597">Phosphoprotein</keyword>
<keyword id="KW-0934">Plastid</keyword>
<keyword id="KW-1185">Reference proteome</keyword>
<keyword id="KW-0808">Transferase</keyword>
<keyword id="KW-0809">Transit peptide</keyword>
<gene>
    <name type="primary">NDPK2</name>
</gene>
<feature type="transit peptide" description="Chloroplast" evidence="2">
    <location>
        <begin position="1"/>
        <end position="67"/>
    </location>
</feature>
<feature type="chain" id="PRO_0000019439" description="Nucleoside diphosphate kinase 2 high molecular weight">
    <location>
        <begin position="68"/>
        <end position="233"/>
    </location>
</feature>
<feature type="chain" id="PRO_0000019440" description="Nucleoside diphosphate kinase 2 low molecular weight">
    <location>
        <begin position="81"/>
        <end position="233"/>
    </location>
</feature>
<feature type="active site" description="Pros-phosphohistidine intermediate" evidence="1">
    <location>
        <position position="199"/>
    </location>
</feature>
<feature type="binding site" evidence="1">
    <location>
        <position position="93"/>
    </location>
    <ligand>
        <name>ATP</name>
        <dbReference type="ChEBI" id="CHEBI:30616"/>
    </ligand>
</feature>
<feature type="binding site" evidence="1">
    <location>
        <position position="141"/>
    </location>
    <ligand>
        <name>ATP</name>
        <dbReference type="ChEBI" id="CHEBI:30616"/>
    </ligand>
</feature>
<feature type="binding site" evidence="1">
    <location>
        <position position="169"/>
    </location>
    <ligand>
        <name>ATP</name>
        <dbReference type="ChEBI" id="CHEBI:30616"/>
    </ligand>
</feature>
<feature type="binding site" evidence="1">
    <location>
        <position position="175"/>
    </location>
    <ligand>
        <name>ATP</name>
        <dbReference type="ChEBI" id="CHEBI:30616"/>
    </ligand>
</feature>
<feature type="binding site" evidence="1">
    <location>
        <position position="186"/>
    </location>
    <ligand>
        <name>ATP</name>
        <dbReference type="ChEBI" id="CHEBI:30616"/>
    </ligand>
</feature>
<feature type="binding site" evidence="1">
    <location>
        <position position="196"/>
    </location>
    <ligand>
        <name>ATP</name>
        <dbReference type="ChEBI" id="CHEBI:30616"/>
    </ligand>
</feature>
<accession>Q01402</accession>
<comment type="function">
    <text>Major role in the synthesis of nucleoside triphosphates other than ATP. The ATP gamma phosphate is transferred to the NDP beta phosphate via a ping-pong mechanism, using a phosphorylated active-site intermediate.</text>
</comment>
<comment type="catalytic activity">
    <reaction>
        <text>a 2'-deoxyribonucleoside 5'-diphosphate + ATP = a 2'-deoxyribonucleoside 5'-triphosphate + ADP</text>
        <dbReference type="Rhea" id="RHEA:44640"/>
        <dbReference type="ChEBI" id="CHEBI:30616"/>
        <dbReference type="ChEBI" id="CHEBI:61560"/>
        <dbReference type="ChEBI" id="CHEBI:73316"/>
        <dbReference type="ChEBI" id="CHEBI:456216"/>
        <dbReference type="EC" id="2.7.4.6"/>
    </reaction>
</comment>
<comment type="catalytic activity">
    <reaction>
        <text>a ribonucleoside 5'-diphosphate + ATP = a ribonucleoside 5'-triphosphate + ADP</text>
        <dbReference type="Rhea" id="RHEA:18113"/>
        <dbReference type="ChEBI" id="CHEBI:30616"/>
        <dbReference type="ChEBI" id="CHEBI:57930"/>
        <dbReference type="ChEBI" id="CHEBI:61557"/>
        <dbReference type="ChEBI" id="CHEBI:456216"/>
        <dbReference type="EC" id="2.7.4.6"/>
    </reaction>
</comment>
<comment type="cofactor">
    <cofactor evidence="1">
        <name>Mg(2+)</name>
        <dbReference type="ChEBI" id="CHEBI:18420"/>
    </cofactor>
</comment>
<comment type="subcellular location">
    <subcellularLocation>
        <location evidence="3">Plastid</location>
        <location evidence="3">Chloroplast</location>
    </subcellularLocation>
</comment>
<comment type="similarity">
    <text evidence="3">Belongs to the NDK family.</text>
</comment>
<evidence type="ECO:0000250" key="1"/>
<evidence type="ECO:0000255" key="2"/>
<evidence type="ECO:0000305" key="3"/>